<organism>
    <name type="scientific">Salmonella typhi</name>
    <dbReference type="NCBI Taxonomy" id="90370"/>
    <lineage>
        <taxon>Bacteria</taxon>
        <taxon>Pseudomonadati</taxon>
        <taxon>Pseudomonadota</taxon>
        <taxon>Gammaproteobacteria</taxon>
        <taxon>Enterobacterales</taxon>
        <taxon>Enterobacteriaceae</taxon>
        <taxon>Salmonella</taxon>
    </lineage>
</organism>
<name>RS16_SALTI</name>
<accession>P0A2B0</accession>
<accession>P36242</accession>
<gene>
    <name evidence="2" type="primary">rpsP</name>
    <name type="ordered locus">STY2863</name>
    <name type="ordered locus">t2631</name>
</gene>
<protein>
    <recommendedName>
        <fullName evidence="2">Small ribosomal subunit protein bS16</fullName>
    </recommendedName>
    <alternativeName>
        <fullName evidence="3">30S ribosomal protein S16</fullName>
    </alternativeName>
</protein>
<sequence>MVTIRLARHGAKKRPFYQVVVTDSRNARNGRFIERVGFFNPIASEKEEGTRLDLDRIAHWVGQGATISDRVAALIKEVKKAA</sequence>
<comment type="function">
    <text evidence="1">In addition to being a ribosomal protein, S16 also has a cation-dependent endonuclease activity.</text>
</comment>
<comment type="similarity">
    <text evidence="2">Belongs to the bacterial ribosomal protein bS16 family.</text>
</comment>
<reference key="1">
    <citation type="journal article" date="2001" name="Nature">
        <title>Complete genome sequence of a multiple drug resistant Salmonella enterica serovar Typhi CT18.</title>
        <authorList>
            <person name="Parkhill J."/>
            <person name="Dougan G."/>
            <person name="James K.D."/>
            <person name="Thomson N.R."/>
            <person name="Pickard D."/>
            <person name="Wain J."/>
            <person name="Churcher C.M."/>
            <person name="Mungall K.L."/>
            <person name="Bentley S.D."/>
            <person name="Holden M.T.G."/>
            <person name="Sebaihia M."/>
            <person name="Baker S."/>
            <person name="Basham D."/>
            <person name="Brooks K."/>
            <person name="Chillingworth T."/>
            <person name="Connerton P."/>
            <person name="Cronin A."/>
            <person name="Davis P."/>
            <person name="Davies R.M."/>
            <person name="Dowd L."/>
            <person name="White N."/>
            <person name="Farrar J."/>
            <person name="Feltwell T."/>
            <person name="Hamlin N."/>
            <person name="Haque A."/>
            <person name="Hien T.T."/>
            <person name="Holroyd S."/>
            <person name="Jagels K."/>
            <person name="Krogh A."/>
            <person name="Larsen T.S."/>
            <person name="Leather S."/>
            <person name="Moule S."/>
            <person name="O'Gaora P."/>
            <person name="Parry C."/>
            <person name="Quail M.A."/>
            <person name="Rutherford K.M."/>
            <person name="Simmonds M."/>
            <person name="Skelton J."/>
            <person name="Stevens K."/>
            <person name="Whitehead S."/>
            <person name="Barrell B.G."/>
        </authorList>
    </citation>
    <scope>NUCLEOTIDE SEQUENCE [LARGE SCALE GENOMIC DNA]</scope>
    <source>
        <strain>CT18</strain>
    </source>
</reference>
<reference key="2">
    <citation type="journal article" date="2003" name="J. Bacteriol.">
        <title>Comparative genomics of Salmonella enterica serovar Typhi strains Ty2 and CT18.</title>
        <authorList>
            <person name="Deng W."/>
            <person name="Liou S.-R."/>
            <person name="Plunkett G. III"/>
            <person name="Mayhew G.F."/>
            <person name="Rose D.J."/>
            <person name="Burland V."/>
            <person name="Kodoyianni V."/>
            <person name="Schwartz D.C."/>
            <person name="Blattner F.R."/>
        </authorList>
    </citation>
    <scope>NUCLEOTIDE SEQUENCE [LARGE SCALE GENOMIC DNA]</scope>
    <source>
        <strain>ATCC 700931 / Ty2</strain>
    </source>
</reference>
<dbReference type="EMBL" id="AL513382">
    <property type="protein sequence ID" value="CAD05855.1"/>
    <property type="molecule type" value="Genomic_DNA"/>
</dbReference>
<dbReference type="EMBL" id="AE014613">
    <property type="protein sequence ID" value="AAO70202.1"/>
    <property type="molecule type" value="Genomic_DNA"/>
</dbReference>
<dbReference type="RefSeq" id="NP_457146.1">
    <property type="nucleotide sequence ID" value="NC_003198.1"/>
</dbReference>
<dbReference type="RefSeq" id="WP_000256453.1">
    <property type="nucleotide sequence ID" value="NZ_WSUR01000036.1"/>
</dbReference>
<dbReference type="SMR" id="P0A2B0"/>
<dbReference type="STRING" id="220341.gene:17586759"/>
<dbReference type="KEGG" id="stt:t2631"/>
<dbReference type="KEGG" id="sty:STY2863"/>
<dbReference type="PATRIC" id="fig|220341.7.peg.2913"/>
<dbReference type="eggNOG" id="COG0228">
    <property type="taxonomic scope" value="Bacteria"/>
</dbReference>
<dbReference type="HOGENOM" id="CLU_100590_5_1_6"/>
<dbReference type="OMA" id="GFYNPIA"/>
<dbReference type="OrthoDB" id="9807878at2"/>
<dbReference type="Proteomes" id="UP000000541">
    <property type="component" value="Chromosome"/>
</dbReference>
<dbReference type="Proteomes" id="UP000002670">
    <property type="component" value="Chromosome"/>
</dbReference>
<dbReference type="GO" id="GO:0005737">
    <property type="term" value="C:cytoplasm"/>
    <property type="evidence" value="ECO:0007669"/>
    <property type="project" value="UniProtKB-ARBA"/>
</dbReference>
<dbReference type="GO" id="GO:0015935">
    <property type="term" value="C:small ribosomal subunit"/>
    <property type="evidence" value="ECO:0007669"/>
    <property type="project" value="TreeGrafter"/>
</dbReference>
<dbReference type="GO" id="GO:0004519">
    <property type="term" value="F:endonuclease activity"/>
    <property type="evidence" value="ECO:0007669"/>
    <property type="project" value="UniProtKB-KW"/>
</dbReference>
<dbReference type="GO" id="GO:0003735">
    <property type="term" value="F:structural constituent of ribosome"/>
    <property type="evidence" value="ECO:0007669"/>
    <property type="project" value="InterPro"/>
</dbReference>
<dbReference type="GO" id="GO:0006412">
    <property type="term" value="P:translation"/>
    <property type="evidence" value="ECO:0007669"/>
    <property type="project" value="UniProtKB-UniRule"/>
</dbReference>
<dbReference type="FunFam" id="3.30.1320.10:FF:000001">
    <property type="entry name" value="30S ribosomal protein S16"/>
    <property type="match status" value="1"/>
</dbReference>
<dbReference type="Gene3D" id="3.30.1320.10">
    <property type="match status" value="1"/>
</dbReference>
<dbReference type="HAMAP" id="MF_00385">
    <property type="entry name" value="Ribosomal_bS16"/>
    <property type="match status" value="1"/>
</dbReference>
<dbReference type="InterPro" id="IPR000307">
    <property type="entry name" value="Ribosomal_bS16"/>
</dbReference>
<dbReference type="InterPro" id="IPR020592">
    <property type="entry name" value="Ribosomal_bS16_CS"/>
</dbReference>
<dbReference type="InterPro" id="IPR023803">
    <property type="entry name" value="Ribosomal_bS16_dom_sf"/>
</dbReference>
<dbReference type="NCBIfam" id="TIGR00002">
    <property type="entry name" value="S16"/>
    <property type="match status" value="1"/>
</dbReference>
<dbReference type="PANTHER" id="PTHR12919">
    <property type="entry name" value="30S RIBOSOMAL PROTEIN S16"/>
    <property type="match status" value="1"/>
</dbReference>
<dbReference type="PANTHER" id="PTHR12919:SF20">
    <property type="entry name" value="SMALL RIBOSOMAL SUBUNIT PROTEIN BS16M"/>
    <property type="match status" value="1"/>
</dbReference>
<dbReference type="Pfam" id="PF00886">
    <property type="entry name" value="Ribosomal_S16"/>
    <property type="match status" value="1"/>
</dbReference>
<dbReference type="SUPFAM" id="SSF54565">
    <property type="entry name" value="Ribosomal protein S16"/>
    <property type="match status" value="1"/>
</dbReference>
<dbReference type="PROSITE" id="PS00732">
    <property type="entry name" value="RIBOSOMAL_S16"/>
    <property type="match status" value="1"/>
</dbReference>
<keyword id="KW-0255">Endonuclease</keyword>
<keyword id="KW-0378">Hydrolase</keyword>
<keyword id="KW-0540">Nuclease</keyword>
<keyword id="KW-0687">Ribonucleoprotein</keyword>
<keyword id="KW-0689">Ribosomal protein</keyword>
<feature type="chain" id="PRO_0000167236" description="Small ribosomal subunit protein bS16">
    <location>
        <begin position="1"/>
        <end position="82"/>
    </location>
</feature>
<proteinExistence type="inferred from homology"/>
<evidence type="ECO:0000250" key="1"/>
<evidence type="ECO:0000255" key="2">
    <source>
        <dbReference type="HAMAP-Rule" id="MF_00385"/>
    </source>
</evidence>
<evidence type="ECO:0000305" key="3"/>